<proteinExistence type="inferred from homology"/>
<organism>
    <name type="scientific">Shigella boydii serotype 4 (strain Sb227)</name>
    <dbReference type="NCBI Taxonomy" id="300268"/>
    <lineage>
        <taxon>Bacteria</taxon>
        <taxon>Pseudomonadati</taxon>
        <taxon>Pseudomonadota</taxon>
        <taxon>Gammaproteobacteria</taxon>
        <taxon>Enterobacterales</taxon>
        <taxon>Enterobacteriaceae</taxon>
        <taxon>Shigella</taxon>
    </lineage>
</organism>
<dbReference type="EC" id="2.7.8.7" evidence="1"/>
<dbReference type="EMBL" id="CP000036">
    <property type="protein sequence ID" value="ABB67134.1"/>
    <property type="molecule type" value="Genomic_DNA"/>
</dbReference>
<dbReference type="RefSeq" id="WP_000986029.1">
    <property type="nucleotide sequence ID" value="NC_007613.1"/>
</dbReference>
<dbReference type="SMR" id="Q31XS4"/>
<dbReference type="GeneID" id="93774528"/>
<dbReference type="KEGG" id="sbo:SBO_2591"/>
<dbReference type="HOGENOM" id="CLU_089696_3_1_6"/>
<dbReference type="Proteomes" id="UP000007067">
    <property type="component" value="Chromosome"/>
</dbReference>
<dbReference type="GO" id="GO:0005737">
    <property type="term" value="C:cytoplasm"/>
    <property type="evidence" value="ECO:0007669"/>
    <property type="project" value="UniProtKB-SubCell"/>
</dbReference>
<dbReference type="GO" id="GO:0008897">
    <property type="term" value="F:holo-[acyl-carrier-protein] synthase activity"/>
    <property type="evidence" value="ECO:0007669"/>
    <property type="project" value="UniProtKB-UniRule"/>
</dbReference>
<dbReference type="GO" id="GO:0000287">
    <property type="term" value="F:magnesium ion binding"/>
    <property type="evidence" value="ECO:0007669"/>
    <property type="project" value="UniProtKB-UniRule"/>
</dbReference>
<dbReference type="GO" id="GO:0006633">
    <property type="term" value="P:fatty acid biosynthetic process"/>
    <property type="evidence" value="ECO:0007669"/>
    <property type="project" value="UniProtKB-UniRule"/>
</dbReference>
<dbReference type="FunFam" id="3.90.470.20:FF:000001">
    <property type="entry name" value="Holo-[acyl-carrier-protein] synthase"/>
    <property type="match status" value="1"/>
</dbReference>
<dbReference type="Gene3D" id="3.90.470.20">
    <property type="entry name" value="4'-phosphopantetheinyl transferase domain"/>
    <property type="match status" value="1"/>
</dbReference>
<dbReference type="HAMAP" id="MF_00101">
    <property type="entry name" value="AcpS"/>
    <property type="match status" value="1"/>
</dbReference>
<dbReference type="InterPro" id="IPR008278">
    <property type="entry name" value="4-PPantetheinyl_Trfase_dom"/>
</dbReference>
<dbReference type="InterPro" id="IPR037143">
    <property type="entry name" value="4-PPantetheinyl_Trfase_dom_sf"/>
</dbReference>
<dbReference type="InterPro" id="IPR002582">
    <property type="entry name" value="ACPS"/>
</dbReference>
<dbReference type="InterPro" id="IPR004568">
    <property type="entry name" value="Ppantetheine-prot_Trfase_dom"/>
</dbReference>
<dbReference type="NCBIfam" id="TIGR00516">
    <property type="entry name" value="acpS"/>
    <property type="match status" value="1"/>
</dbReference>
<dbReference type="NCBIfam" id="TIGR00556">
    <property type="entry name" value="pantethn_trn"/>
    <property type="match status" value="1"/>
</dbReference>
<dbReference type="Pfam" id="PF01648">
    <property type="entry name" value="ACPS"/>
    <property type="match status" value="1"/>
</dbReference>
<dbReference type="SUPFAM" id="SSF56214">
    <property type="entry name" value="4'-phosphopantetheinyl transferase"/>
    <property type="match status" value="1"/>
</dbReference>
<accession>Q31XS4</accession>
<sequence>MAILGLGTDIVEIARIEAVIARSGERLARRVLSDNEWAIWKTHHQPVRFLAKRFAVKEAAAKAFGTGIRNGLAFNQFEVFNDELGKPRLRLWGEALKLAEKLGVVNMHVTLADERHYACATVIIES</sequence>
<reference key="1">
    <citation type="journal article" date="2005" name="Nucleic Acids Res.">
        <title>Genome dynamics and diversity of Shigella species, the etiologic agents of bacillary dysentery.</title>
        <authorList>
            <person name="Yang F."/>
            <person name="Yang J."/>
            <person name="Zhang X."/>
            <person name="Chen L."/>
            <person name="Jiang Y."/>
            <person name="Yan Y."/>
            <person name="Tang X."/>
            <person name="Wang J."/>
            <person name="Xiong Z."/>
            <person name="Dong J."/>
            <person name="Xue Y."/>
            <person name="Zhu Y."/>
            <person name="Xu X."/>
            <person name="Sun L."/>
            <person name="Chen S."/>
            <person name="Nie H."/>
            <person name="Peng J."/>
            <person name="Xu J."/>
            <person name="Wang Y."/>
            <person name="Yuan Z."/>
            <person name="Wen Y."/>
            <person name="Yao Z."/>
            <person name="Shen Y."/>
            <person name="Qiang B."/>
            <person name="Hou Y."/>
            <person name="Yu J."/>
            <person name="Jin Q."/>
        </authorList>
    </citation>
    <scope>NUCLEOTIDE SEQUENCE [LARGE SCALE GENOMIC DNA]</scope>
    <source>
        <strain>Sb227</strain>
    </source>
</reference>
<feature type="chain" id="PRO_0000228303" description="Holo-[acyl-carrier-protein] synthase">
    <location>
        <begin position="1"/>
        <end position="126"/>
    </location>
</feature>
<feature type="binding site" evidence="1">
    <location>
        <position position="9"/>
    </location>
    <ligand>
        <name>Mg(2+)</name>
        <dbReference type="ChEBI" id="CHEBI:18420"/>
    </ligand>
</feature>
<feature type="binding site" evidence="1">
    <location>
        <position position="58"/>
    </location>
    <ligand>
        <name>Mg(2+)</name>
        <dbReference type="ChEBI" id="CHEBI:18420"/>
    </ligand>
</feature>
<protein>
    <recommendedName>
        <fullName evidence="1">Holo-[acyl-carrier-protein] synthase</fullName>
        <shortName evidence="1">Holo-ACP synthase</shortName>
        <ecNumber evidence="1">2.7.8.7</ecNumber>
    </recommendedName>
    <alternativeName>
        <fullName evidence="1">4'-phosphopantetheinyl transferase AcpS</fullName>
    </alternativeName>
</protein>
<gene>
    <name evidence="1" type="primary">acpS</name>
    <name type="ordered locus">SBO_2591</name>
</gene>
<keyword id="KW-0963">Cytoplasm</keyword>
<keyword id="KW-0275">Fatty acid biosynthesis</keyword>
<keyword id="KW-0276">Fatty acid metabolism</keyword>
<keyword id="KW-0444">Lipid biosynthesis</keyword>
<keyword id="KW-0443">Lipid metabolism</keyword>
<keyword id="KW-0460">Magnesium</keyword>
<keyword id="KW-0479">Metal-binding</keyword>
<keyword id="KW-0808">Transferase</keyword>
<comment type="function">
    <text evidence="1">Transfers the 4'-phosphopantetheine moiety from coenzyme A to a Ser of acyl-carrier-protein.</text>
</comment>
<comment type="catalytic activity">
    <reaction evidence="1">
        <text>apo-[ACP] + CoA = holo-[ACP] + adenosine 3',5'-bisphosphate + H(+)</text>
        <dbReference type="Rhea" id="RHEA:12068"/>
        <dbReference type="Rhea" id="RHEA-COMP:9685"/>
        <dbReference type="Rhea" id="RHEA-COMP:9690"/>
        <dbReference type="ChEBI" id="CHEBI:15378"/>
        <dbReference type="ChEBI" id="CHEBI:29999"/>
        <dbReference type="ChEBI" id="CHEBI:57287"/>
        <dbReference type="ChEBI" id="CHEBI:58343"/>
        <dbReference type="ChEBI" id="CHEBI:64479"/>
        <dbReference type="EC" id="2.7.8.7"/>
    </reaction>
</comment>
<comment type="cofactor">
    <cofactor evidence="1">
        <name>Mg(2+)</name>
        <dbReference type="ChEBI" id="CHEBI:18420"/>
    </cofactor>
</comment>
<comment type="subcellular location">
    <subcellularLocation>
        <location evidence="1">Cytoplasm</location>
    </subcellularLocation>
</comment>
<comment type="similarity">
    <text evidence="1">Belongs to the P-Pant transferase superfamily. AcpS family.</text>
</comment>
<evidence type="ECO:0000255" key="1">
    <source>
        <dbReference type="HAMAP-Rule" id="MF_00101"/>
    </source>
</evidence>
<name>ACPS_SHIBS</name>